<organism>
    <name type="scientific">Helicobacter pylori (strain ATCC 700392 / 26695)</name>
    <name type="common">Campylobacter pylori</name>
    <dbReference type="NCBI Taxonomy" id="85962"/>
    <lineage>
        <taxon>Bacteria</taxon>
        <taxon>Pseudomonadati</taxon>
        <taxon>Campylobacterota</taxon>
        <taxon>Epsilonproteobacteria</taxon>
        <taxon>Campylobacterales</taxon>
        <taxon>Helicobacteraceae</taxon>
        <taxon>Helicobacter</taxon>
    </lineage>
</organism>
<reference key="1">
    <citation type="journal article" date="1997" name="Nature">
        <title>The complete genome sequence of the gastric pathogen Helicobacter pylori.</title>
        <authorList>
            <person name="Tomb J.-F."/>
            <person name="White O."/>
            <person name="Kerlavage A.R."/>
            <person name="Clayton R.A."/>
            <person name="Sutton G.G."/>
            <person name="Fleischmann R.D."/>
            <person name="Ketchum K.A."/>
            <person name="Klenk H.-P."/>
            <person name="Gill S.R."/>
            <person name="Dougherty B.A."/>
            <person name="Nelson K.E."/>
            <person name="Quackenbush J."/>
            <person name="Zhou L."/>
            <person name="Kirkness E.F."/>
            <person name="Peterson S.N."/>
            <person name="Loftus B.J."/>
            <person name="Richardson D.L."/>
            <person name="Dodson R.J."/>
            <person name="Khalak H.G."/>
            <person name="Glodek A."/>
            <person name="McKenney K."/>
            <person name="FitzGerald L.M."/>
            <person name="Lee N."/>
            <person name="Adams M.D."/>
            <person name="Hickey E.K."/>
            <person name="Berg D.E."/>
            <person name="Gocayne J.D."/>
            <person name="Utterback T.R."/>
            <person name="Peterson J.D."/>
            <person name="Kelley J.M."/>
            <person name="Cotton M.D."/>
            <person name="Weidman J.F."/>
            <person name="Fujii C."/>
            <person name="Bowman C."/>
            <person name="Watthey L."/>
            <person name="Wallin E."/>
            <person name="Hayes W.S."/>
            <person name="Borodovsky M."/>
            <person name="Karp P.D."/>
            <person name="Smith H.O."/>
            <person name="Fraser C.M."/>
            <person name="Venter J.C."/>
        </authorList>
    </citation>
    <scope>NUCLEOTIDE SEQUENCE [LARGE SCALE GENOMIC DNA]</scope>
    <source>
        <strain>ATCC 700392 / 26695</strain>
    </source>
</reference>
<accession>O25499</accession>
<feature type="chain" id="PRO_0000167356" description="UPF0102 protein HP_0823">
    <location>
        <begin position="1"/>
        <end position="114"/>
    </location>
</feature>
<gene>
    <name type="ordered locus">HP_0823</name>
</gene>
<comment type="similarity">
    <text evidence="1">Belongs to the UPF0102 family.</text>
</comment>
<name>Y823_HELPY</name>
<keyword id="KW-1185">Reference proteome</keyword>
<protein>
    <recommendedName>
        <fullName>UPF0102 protein HP_0823</fullName>
    </recommendedName>
</protein>
<dbReference type="EMBL" id="AE000511">
    <property type="protein sequence ID" value="AAD07870.1"/>
    <property type="molecule type" value="Genomic_DNA"/>
</dbReference>
<dbReference type="PIR" id="G64622">
    <property type="entry name" value="G64622"/>
</dbReference>
<dbReference type="RefSeq" id="NP_207616.1">
    <property type="nucleotide sequence ID" value="NC_000915.1"/>
</dbReference>
<dbReference type="RefSeq" id="WP_001211699.1">
    <property type="nucleotide sequence ID" value="NC_018939.1"/>
</dbReference>
<dbReference type="SMR" id="O25499"/>
<dbReference type="DIP" id="DIP-3532N"/>
<dbReference type="IntAct" id="O25499">
    <property type="interactions" value="8"/>
</dbReference>
<dbReference type="MINT" id="O25499"/>
<dbReference type="STRING" id="85962.HP_0823"/>
<dbReference type="PaxDb" id="85962-C694_04215"/>
<dbReference type="DNASU" id="898897"/>
<dbReference type="EnsemblBacteria" id="AAD07870">
    <property type="protein sequence ID" value="AAD07870"/>
    <property type="gene ID" value="HP_0823"/>
</dbReference>
<dbReference type="KEGG" id="heo:C694_04215"/>
<dbReference type="KEGG" id="hpy:HP_0823"/>
<dbReference type="PATRIC" id="fig|85962.47.peg.877"/>
<dbReference type="eggNOG" id="COG0792">
    <property type="taxonomic scope" value="Bacteria"/>
</dbReference>
<dbReference type="InParanoid" id="O25499"/>
<dbReference type="OrthoDB" id="9794876at2"/>
<dbReference type="PhylomeDB" id="O25499"/>
<dbReference type="Proteomes" id="UP000000429">
    <property type="component" value="Chromosome"/>
</dbReference>
<dbReference type="GO" id="GO:0003676">
    <property type="term" value="F:nucleic acid binding"/>
    <property type="evidence" value="ECO:0007669"/>
    <property type="project" value="InterPro"/>
</dbReference>
<dbReference type="Gene3D" id="3.40.1350.10">
    <property type="match status" value="1"/>
</dbReference>
<dbReference type="HAMAP" id="MF_00048">
    <property type="entry name" value="UPF0102"/>
    <property type="match status" value="1"/>
</dbReference>
<dbReference type="InterPro" id="IPR011335">
    <property type="entry name" value="Restrct_endonuc-II-like"/>
</dbReference>
<dbReference type="InterPro" id="IPR011856">
    <property type="entry name" value="tRNA_endonuc-like_dom_sf"/>
</dbReference>
<dbReference type="InterPro" id="IPR003509">
    <property type="entry name" value="UPF0102_YraN-like"/>
</dbReference>
<dbReference type="NCBIfam" id="NF009152">
    <property type="entry name" value="PRK12497.2-4"/>
    <property type="match status" value="1"/>
</dbReference>
<dbReference type="PANTHER" id="PTHR34039">
    <property type="entry name" value="UPF0102 PROTEIN YRAN"/>
    <property type="match status" value="1"/>
</dbReference>
<dbReference type="PANTHER" id="PTHR34039:SF1">
    <property type="entry name" value="UPF0102 PROTEIN YRAN"/>
    <property type="match status" value="1"/>
</dbReference>
<dbReference type="Pfam" id="PF02021">
    <property type="entry name" value="UPF0102"/>
    <property type="match status" value="1"/>
</dbReference>
<dbReference type="SUPFAM" id="SSF52980">
    <property type="entry name" value="Restriction endonuclease-like"/>
    <property type="match status" value="1"/>
</dbReference>
<evidence type="ECO:0000305" key="1"/>
<sequence>MRFLNNKHREKGLKAEEEACGFLKSLGFEMVERNFFSQFGEIDIIALKKGVLHFIEVKSGENFDPIYAITPSKLKKMIKTIRCYLSQKDPNSDFCIDALIVKNGKFELLENITF</sequence>
<proteinExistence type="inferred from homology"/>